<gene>
    <name evidence="1" type="primary">thiL</name>
    <name type="ordered locus">MT3055</name>
</gene>
<organism>
    <name type="scientific">Mycobacterium tuberculosis (strain CDC 1551 / Oshkosh)</name>
    <dbReference type="NCBI Taxonomy" id="83331"/>
    <lineage>
        <taxon>Bacteria</taxon>
        <taxon>Bacillati</taxon>
        <taxon>Actinomycetota</taxon>
        <taxon>Actinomycetes</taxon>
        <taxon>Mycobacteriales</taxon>
        <taxon>Mycobacteriaceae</taxon>
        <taxon>Mycobacterium</taxon>
        <taxon>Mycobacterium tuberculosis complex</taxon>
    </lineage>
</organism>
<feature type="chain" id="PRO_0000428413" description="Thiamine-monophosphate kinase">
    <location>
        <begin position="1"/>
        <end position="333"/>
    </location>
</feature>
<feature type="binding site" evidence="1">
    <location>
        <position position="44"/>
    </location>
    <ligand>
        <name>Mg(2+)</name>
        <dbReference type="ChEBI" id="CHEBI:18420"/>
        <label>3</label>
    </ligand>
</feature>
<feature type="binding site" evidence="1">
    <location>
        <position position="44"/>
    </location>
    <ligand>
        <name>Mg(2+)</name>
        <dbReference type="ChEBI" id="CHEBI:18420"/>
        <label>4</label>
    </ligand>
</feature>
<feature type="binding site" evidence="1">
    <location>
        <position position="58"/>
    </location>
    <ligand>
        <name>Mg(2+)</name>
        <dbReference type="ChEBI" id="CHEBI:18420"/>
        <label>4</label>
    </ligand>
</feature>
<feature type="binding site" evidence="1">
    <location>
        <position position="59"/>
    </location>
    <ligand>
        <name>Mg(2+)</name>
        <dbReference type="ChEBI" id="CHEBI:18420"/>
        <label>1</label>
    </ligand>
</feature>
<feature type="binding site" evidence="1">
    <location>
        <position position="60"/>
    </location>
    <ligand>
        <name>Mg(2+)</name>
        <dbReference type="ChEBI" id="CHEBI:18420"/>
        <label>1</label>
    </ligand>
</feature>
<feature type="binding site" evidence="1">
    <location>
        <position position="60"/>
    </location>
    <ligand>
        <name>Mg(2+)</name>
        <dbReference type="ChEBI" id="CHEBI:18420"/>
        <label>2</label>
    </ligand>
</feature>
<feature type="binding site" evidence="1">
    <location>
        <position position="67"/>
    </location>
    <ligand>
        <name>substrate</name>
    </ligand>
</feature>
<feature type="binding site" evidence="1">
    <location>
        <position position="89"/>
    </location>
    <ligand>
        <name>Mg(2+)</name>
        <dbReference type="ChEBI" id="CHEBI:18420"/>
        <label>2</label>
    </ligand>
</feature>
<feature type="binding site" evidence="1">
    <location>
        <position position="89"/>
    </location>
    <ligand>
        <name>Mg(2+)</name>
        <dbReference type="ChEBI" id="CHEBI:18420"/>
        <label>3</label>
    </ligand>
</feature>
<feature type="binding site" evidence="1">
    <location>
        <position position="89"/>
    </location>
    <ligand>
        <name>Mg(2+)</name>
        <dbReference type="ChEBI" id="CHEBI:18420"/>
        <label>4</label>
    </ligand>
</feature>
<feature type="binding site" evidence="1">
    <location>
        <begin position="136"/>
        <end position="137"/>
    </location>
    <ligand>
        <name>ATP</name>
        <dbReference type="ChEBI" id="CHEBI:30616"/>
    </ligand>
</feature>
<feature type="binding site" evidence="1">
    <location>
        <position position="137"/>
    </location>
    <ligand>
        <name>Mg(2+)</name>
        <dbReference type="ChEBI" id="CHEBI:18420"/>
        <label>1</label>
    </ligand>
</feature>
<feature type="binding site" evidence="1">
    <location>
        <position position="162"/>
    </location>
    <ligand>
        <name>ATP</name>
        <dbReference type="ChEBI" id="CHEBI:30616"/>
    </ligand>
</feature>
<feature type="binding site" evidence="1">
    <location>
        <position position="224"/>
    </location>
    <ligand>
        <name>Mg(2+)</name>
        <dbReference type="ChEBI" id="CHEBI:18420"/>
        <label>3</label>
    </ligand>
</feature>
<feature type="binding site" evidence="1">
    <location>
        <position position="226"/>
    </location>
    <ligand>
        <name>ATP</name>
        <dbReference type="ChEBI" id="CHEBI:30616"/>
    </ligand>
</feature>
<feature type="binding site" evidence="1">
    <location>
        <position position="227"/>
    </location>
    <ligand>
        <name>Mg(2+)</name>
        <dbReference type="ChEBI" id="CHEBI:18420"/>
        <label>5</label>
    </ligand>
</feature>
<feature type="binding site" evidence="1">
    <location>
        <position position="278"/>
    </location>
    <ligand>
        <name>substrate</name>
    </ligand>
</feature>
<feature type="binding site" evidence="1">
    <location>
        <position position="320"/>
    </location>
    <ligand>
        <name>substrate</name>
    </ligand>
</feature>
<dbReference type="EC" id="2.7.4.16" evidence="1"/>
<dbReference type="EMBL" id="AE000516">
    <property type="protein sequence ID" value="AAK47382.1"/>
    <property type="molecule type" value="Genomic_DNA"/>
</dbReference>
<dbReference type="PIR" id="F70672">
    <property type="entry name" value="F70672"/>
</dbReference>
<dbReference type="RefSeq" id="WP_003415034.1">
    <property type="nucleotide sequence ID" value="NZ_KK341227.1"/>
</dbReference>
<dbReference type="SMR" id="P9WG70"/>
<dbReference type="KEGG" id="mtc:MT3055"/>
<dbReference type="PATRIC" id="fig|83331.31.peg.3298"/>
<dbReference type="HOGENOM" id="CLU_046964_0_1_11"/>
<dbReference type="UniPathway" id="UPA00060">
    <property type="reaction ID" value="UER00142"/>
</dbReference>
<dbReference type="Proteomes" id="UP000001020">
    <property type="component" value="Chromosome"/>
</dbReference>
<dbReference type="GO" id="GO:0005524">
    <property type="term" value="F:ATP binding"/>
    <property type="evidence" value="ECO:0007669"/>
    <property type="project" value="UniProtKB-UniRule"/>
</dbReference>
<dbReference type="GO" id="GO:0000287">
    <property type="term" value="F:magnesium ion binding"/>
    <property type="evidence" value="ECO:0007669"/>
    <property type="project" value="UniProtKB-UniRule"/>
</dbReference>
<dbReference type="GO" id="GO:0009030">
    <property type="term" value="F:thiamine-phosphate kinase activity"/>
    <property type="evidence" value="ECO:0007669"/>
    <property type="project" value="UniProtKB-UniRule"/>
</dbReference>
<dbReference type="GO" id="GO:0009228">
    <property type="term" value="P:thiamine biosynthetic process"/>
    <property type="evidence" value="ECO:0007669"/>
    <property type="project" value="UniProtKB-KW"/>
</dbReference>
<dbReference type="GO" id="GO:0009229">
    <property type="term" value="P:thiamine diphosphate biosynthetic process"/>
    <property type="evidence" value="ECO:0007669"/>
    <property type="project" value="UniProtKB-UniRule"/>
</dbReference>
<dbReference type="CDD" id="cd02194">
    <property type="entry name" value="ThiL"/>
    <property type="match status" value="1"/>
</dbReference>
<dbReference type="Gene3D" id="3.90.650.10">
    <property type="entry name" value="PurM-like C-terminal domain"/>
    <property type="match status" value="1"/>
</dbReference>
<dbReference type="Gene3D" id="3.30.1330.10">
    <property type="entry name" value="PurM-like, N-terminal domain"/>
    <property type="match status" value="1"/>
</dbReference>
<dbReference type="HAMAP" id="MF_02128">
    <property type="entry name" value="TMP_kinase"/>
    <property type="match status" value="1"/>
</dbReference>
<dbReference type="InterPro" id="IPR010918">
    <property type="entry name" value="PurM-like_C_dom"/>
</dbReference>
<dbReference type="InterPro" id="IPR036676">
    <property type="entry name" value="PurM-like_C_sf"/>
</dbReference>
<dbReference type="InterPro" id="IPR016188">
    <property type="entry name" value="PurM-like_N"/>
</dbReference>
<dbReference type="InterPro" id="IPR036921">
    <property type="entry name" value="PurM-like_N_sf"/>
</dbReference>
<dbReference type="InterPro" id="IPR006283">
    <property type="entry name" value="ThiL-like"/>
</dbReference>
<dbReference type="NCBIfam" id="NF004351">
    <property type="entry name" value="PRK05731.1-4"/>
    <property type="match status" value="1"/>
</dbReference>
<dbReference type="NCBIfam" id="TIGR01379">
    <property type="entry name" value="thiL"/>
    <property type="match status" value="1"/>
</dbReference>
<dbReference type="PANTHER" id="PTHR30270">
    <property type="entry name" value="THIAMINE-MONOPHOSPHATE KINASE"/>
    <property type="match status" value="1"/>
</dbReference>
<dbReference type="PANTHER" id="PTHR30270:SF0">
    <property type="entry name" value="THIAMINE-MONOPHOSPHATE KINASE"/>
    <property type="match status" value="1"/>
</dbReference>
<dbReference type="Pfam" id="PF00586">
    <property type="entry name" value="AIRS"/>
    <property type="match status" value="1"/>
</dbReference>
<dbReference type="Pfam" id="PF02769">
    <property type="entry name" value="AIRS_C"/>
    <property type="match status" value="1"/>
</dbReference>
<dbReference type="PIRSF" id="PIRSF005303">
    <property type="entry name" value="Thiam_monoph_kin"/>
    <property type="match status" value="1"/>
</dbReference>
<dbReference type="SUPFAM" id="SSF56042">
    <property type="entry name" value="PurM C-terminal domain-like"/>
    <property type="match status" value="1"/>
</dbReference>
<dbReference type="SUPFAM" id="SSF55326">
    <property type="entry name" value="PurM N-terminal domain-like"/>
    <property type="match status" value="1"/>
</dbReference>
<comment type="function">
    <text evidence="1">Catalyzes the ATP-dependent phosphorylation of thiamine-monophosphate (TMP) to form thiamine-pyrophosphate (TPP), the active form of vitamin B1.</text>
</comment>
<comment type="catalytic activity">
    <reaction evidence="1">
        <text>thiamine phosphate + ATP = thiamine diphosphate + ADP</text>
        <dbReference type="Rhea" id="RHEA:15913"/>
        <dbReference type="ChEBI" id="CHEBI:30616"/>
        <dbReference type="ChEBI" id="CHEBI:37575"/>
        <dbReference type="ChEBI" id="CHEBI:58937"/>
        <dbReference type="ChEBI" id="CHEBI:456216"/>
        <dbReference type="EC" id="2.7.4.16"/>
    </reaction>
</comment>
<comment type="pathway">
    <text evidence="1">Cofactor biosynthesis; thiamine diphosphate biosynthesis; thiamine diphosphate from thiamine phosphate: step 1/1.</text>
</comment>
<comment type="miscellaneous">
    <text evidence="1">Reaction mechanism of ThiL seems to utilize a direct, inline transfer of the gamma-phosphate of ATP to TMP rather than a phosphorylated enzyme intermediate.</text>
</comment>
<comment type="similarity">
    <text evidence="1">Belongs to the thiamine-monophosphate kinase family.</text>
</comment>
<proteinExistence type="inferred from homology"/>
<evidence type="ECO:0000255" key="1">
    <source>
        <dbReference type="HAMAP-Rule" id="MF_02128"/>
    </source>
</evidence>
<keyword id="KW-0067">ATP-binding</keyword>
<keyword id="KW-0418">Kinase</keyword>
<keyword id="KW-0460">Magnesium</keyword>
<keyword id="KW-0479">Metal-binding</keyword>
<keyword id="KW-0547">Nucleotide-binding</keyword>
<keyword id="KW-1185">Reference proteome</keyword>
<keyword id="KW-0784">Thiamine biosynthesis</keyword>
<keyword id="KW-0808">Transferase</keyword>
<name>THIL_MYCTO</name>
<accession>P9WG70</accession>
<accession>L0TE44</accession>
<accession>P95118</accession>
<accession>Q7D6B7</accession>
<reference key="1">
    <citation type="journal article" date="2002" name="J. Bacteriol.">
        <title>Whole-genome comparison of Mycobacterium tuberculosis clinical and laboratory strains.</title>
        <authorList>
            <person name="Fleischmann R.D."/>
            <person name="Alland D."/>
            <person name="Eisen J.A."/>
            <person name="Carpenter L."/>
            <person name="White O."/>
            <person name="Peterson J.D."/>
            <person name="DeBoy R.T."/>
            <person name="Dodson R.J."/>
            <person name="Gwinn M.L."/>
            <person name="Haft D.H."/>
            <person name="Hickey E.K."/>
            <person name="Kolonay J.F."/>
            <person name="Nelson W.C."/>
            <person name="Umayam L.A."/>
            <person name="Ermolaeva M.D."/>
            <person name="Salzberg S.L."/>
            <person name="Delcher A."/>
            <person name="Utterback T.R."/>
            <person name="Weidman J.F."/>
            <person name="Khouri H.M."/>
            <person name="Gill J."/>
            <person name="Mikula A."/>
            <person name="Bishai W."/>
            <person name="Jacobs W.R. Jr."/>
            <person name="Venter J.C."/>
            <person name="Fraser C.M."/>
        </authorList>
    </citation>
    <scope>NUCLEOTIDE SEQUENCE [LARGE SCALE GENOMIC DNA]</scope>
    <source>
        <strain>CDC 1551 / Oshkosh</strain>
    </source>
</reference>
<sequence length="333" mass="34331">MTTKDHSLATESPTLQQLGEFAVIDRLVRGRRQPATVLLGPGDDAALVSAGDGRTVVSTDMLVQDSHFRLDWSTPQDVGRKAIAQNAADIEAMGARATAFVVGFGAPAETPAAQASALVDGMWEEAGRIGAGIVGGDLVSCRQWVVSVTAIGDLDGRAPVLRSGAKAGSVLAVVGELGRSAAGYALWCNGIEDFAELRRRHLVPQPPYGHGAAAAAVGAQAMIDVSDGLLADLRHIAEASGVRIDLSAAALAADRDALTAAATALGTDPWPWVLSGGEDHALVACFVGPVPAGWRTIGRVLDGPARVLVDGEEWTGYAGWQSFGEPDNQGSLG</sequence>
<protein>
    <recommendedName>
        <fullName evidence="1">Thiamine-monophosphate kinase</fullName>
        <shortName evidence="1">TMP kinase</shortName>
        <shortName evidence="1">Thiamine-phosphate kinase</shortName>
        <ecNumber evidence="1">2.7.4.16</ecNumber>
    </recommendedName>
</protein>